<comment type="function">
    <text evidence="1">Increases the formation of ribosomal termination complexes and stimulates activities of RF-1 and RF-2. It binds guanine nucleotides and has strong preference for UGA stop codons. It may interact directly with the ribosome. The stimulation of RF-1 and RF-2 is significantly reduced by GTP and GDP, but not by GMP.</text>
</comment>
<comment type="subcellular location">
    <subcellularLocation>
        <location evidence="1">Cytoplasm</location>
    </subcellularLocation>
</comment>
<comment type="similarity">
    <text evidence="1">Belongs to the TRAFAC class translation factor GTPase superfamily. Classic translation factor GTPase family. PrfC subfamily.</text>
</comment>
<organism>
    <name type="scientific">Actinobacillus pleuropneumoniae serotype 5b (strain L20)</name>
    <dbReference type="NCBI Taxonomy" id="416269"/>
    <lineage>
        <taxon>Bacteria</taxon>
        <taxon>Pseudomonadati</taxon>
        <taxon>Pseudomonadota</taxon>
        <taxon>Gammaproteobacteria</taxon>
        <taxon>Pasteurellales</taxon>
        <taxon>Pasteurellaceae</taxon>
        <taxon>Actinobacillus</taxon>
    </lineage>
</organism>
<name>RF3_ACTP2</name>
<dbReference type="EMBL" id="CP000569">
    <property type="protein sequence ID" value="ABN73138.1"/>
    <property type="molecule type" value="Genomic_DNA"/>
</dbReference>
<dbReference type="RefSeq" id="WP_009874732.1">
    <property type="nucleotide sequence ID" value="NC_009053.1"/>
</dbReference>
<dbReference type="SMR" id="A3MYA2"/>
<dbReference type="STRING" id="416269.APL_0030"/>
<dbReference type="EnsemblBacteria" id="ABN73138">
    <property type="protein sequence ID" value="ABN73138"/>
    <property type="gene ID" value="APL_0030"/>
</dbReference>
<dbReference type="KEGG" id="apl:APL_0030"/>
<dbReference type="PATRIC" id="fig|416269.6.peg.32"/>
<dbReference type="eggNOG" id="COG4108">
    <property type="taxonomic scope" value="Bacteria"/>
</dbReference>
<dbReference type="HOGENOM" id="CLU_002794_2_1_6"/>
<dbReference type="Proteomes" id="UP000001432">
    <property type="component" value="Chromosome"/>
</dbReference>
<dbReference type="GO" id="GO:0005829">
    <property type="term" value="C:cytosol"/>
    <property type="evidence" value="ECO:0007669"/>
    <property type="project" value="TreeGrafter"/>
</dbReference>
<dbReference type="GO" id="GO:0005525">
    <property type="term" value="F:GTP binding"/>
    <property type="evidence" value="ECO:0007669"/>
    <property type="project" value="UniProtKB-UniRule"/>
</dbReference>
<dbReference type="GO" id="GO:0003924">
    <property type="term" value="F:GTPase activity"/>
    <property type="evidence" value="ECO:0007669"/>
    <property type="project" value="InterPro"/>
</dbReference>
<dbReference type="GO" id="GO:0097216">
    <property type="term" value="F:guanosine tetraphosphate binding"/>
    <property type="evidence" value="ECO:0007669"/>
    <property type="project" value="UniProtKB-ARBA"/>
</dbReference>
<dbReference type="GO" id="GO:0016150">
    <property type="term" value="F:translation release factor activity, codon nonspecific"/>
    <property type="evidence" value="ECO:0007669"/>
    <property type="project" value="TreeGrafter"/>
</dbReference>
<dbReference type="GO" id="GO:0016149">
    <property type="term" value="F:translation release factor activity, codon specific"/>
    <property type="evidence" value="ECO:0007669"/>
    <property type="project" value="UniProtKB-UniRule"/>
</dbReference>
<dbReference type="GO" id="GO:0006449">
    <property type="term" value="P:regulation of translational termination"/>
    <property type="evidence" value="ECO:0007669"/>
    <property type="project" value="UniProtKB-UniRule"/>
</dbReference>
<dbReference type="CDD" id="cd04169">
    <property type="entry name" value="RF3"/>
    <property type="match status" value="1"/>
</dbReference>
<dbReference type="CDD" id="cd03689">
    <property type="entry name" value="RF3_II"/>
    <property type="match status" value="1"/>
</dbReference>
<dbReference type="CDD" id="cd16259">
    <property type="entry name" value="RF3_III"/>
    <property type="match status" value="1"/>
</dbReference>
<dbReference type="FunFam" id="2.40.30.10:FF:000040">
    <property type="entry name" value="Peptide chain release factor 3"/>
    <property type="match status" value="1"/>
</dbReference>
<dbReference type="FunFam" id="3.30.70.3280:FF:000001">
    <property type="entry name" value="Peptide chain release factor 3"/>
    <property type="match status" value="1"/>
</dbReference>
<dbReference type="FunFam" id="3.40.50.300:FF:000542">
    <property type="entry name" value="Peptide chain release factor 3"/>
    <property type="match status" value="1"/>
</dbReference>
<dbReference type="Gene3D" id="3.40.50.300">
    <property type="entry name" value="P-loop containing nucleotide triphosphate hydrolases"/>
    <property type="match status" value="2"/>
</dbReference>
<dbReference type="Gene3D" id="3.30.70.3280">
    <property type="entry name" value="Peptide chain release factor 3, domain III"/>
    <property type="match status" value="1"/>
</dbReference>
<dbReference type="HAMAP" id="MF_00072">
    <property type="entry name" value="Rel_fac_3"/>
    <property type="match status" value="1"/>
</dbReference>
<dbReference type="InterPro" id="IPR053905">
    <property type="entry name" value="EF-G-like_DII"/>
</dbReference>
<dbReference type="InterPro" id="IPR035647">
    <property type="entry name" value="EFG_III/V"/>
</dbReference>
<dbReference type="InterPro" id="IPR031157">
    <property type="entry name" value="G_TR_CS"/>
</dbReference>
<dbReference type="InterPro" id="IPR027417">
    <property type="entry name" value="P-loop_NTPase"/>
</dbReference>
<dbReference type="InterPro" id="IPR004548">
    <property type="entry name" value="PrfC"/>
</dbReference>
<dbReference type="InterPro" id="IPR032090">
    <property type="entry name" value="RF3_C"/>
</dbReference>
<dbReference type="InterPro" id="IPR038467">
    <property type="entry name" value="RF3_dom_3_sf"/>
</dbReference>
<dbReference type="InterPro" id="IPR041732">
    <property type="entry name" value="RF3_GTP-bd"/>
</dbReference>
<dbReference type="InterPro" id="IPR005225">
    <property type="entry name" value="Small_GTP-bd"/>
</dbReference>
<dbReference type="InterPro" id="IPR000795">
    <property type="entry name" value="T_Tr_GTP-bd_dom"/>
</dbReference>
<dbReference type="InterPro" id="IPR009000">
    <property type="entry name" value="Transl_B-barrel_sf"/>
</dbReference>
<dbReference type="NCBIfam" id="TIGR00503">
    <property type="entry name" value="prfC"/>
    <property type="match status" value="1"/>
</dbReference>
<dbReference type="NCBIfam" id="NF001964">
    <property type="entry name" value="PRK00741.1"/>
    <property type="match status" value="1"/>
</dbReference>
<dbReference type="NCBIfam" id="TIGR00231">
    <property type="entry name" value="small_GTP"/>
    <property type="match status" value="1"/>
</dbReference>
<dbReference type="PANTHER" id="PTHR43556">
    <property type="entry name" value="PEPTIDE CHAIN RELEASE FACTOR RF3"/>
    <property type="match status" value="1"/>
</dbReference>
<dbReference type="PANTHER" id="PTHR43556:SF2">
    <property type="entry name" value="PEPTIDE CHAIN RELEASE FACTOR RF3"/>
    <property type="match status" value="1"/>
</dbReference>
<dbReference type="Pfam" id="PF22042">
    <property type="entry name" value="EF-G_D2"/>
    <property type="match status" value="1"/>
</dbReference>
<dbReference type="Pfam" id="PF00009">
    <property type="entry name" value="GTP_EFTU"/>
    <property type="match status" value="1"/>
</dbReference>
<dbReference type="Pfam" id="PF16658">
    <property type="entry name" value="RF3_C"/>
    <property type="match status" value="1"/>
</dbReference>
<dbReference type="PRINTS" id="PR00315">
    <property type="entry name" value="ELONGATNFCT"/>
</dbReference>
<dbReference type="SUPFAM" id="SSF54980">
    <property type="entry name" value="EF-G C-terminal domain-like"/>
    <property type="match status" value="1"/>
</dbReference>
<dbReference type="SUPFAM" id="SSF52540">
    <property type="entry name" value="P-loop containing nucleoside triphosphate hydrolases"/>
    <property type="match status" value="1"/>
</dbReference>
<dbReference type="SUPFAM" id="SSF50447">
    <property type="entry name" value="Translation proteins"/>
    <property type="match status" value="1"/>
</dbReference>
<dbReference type="PROSITE" id="PS00301">
    <property type="entry name" value="G_TR_1"/>
    <property type="match status" value="1"/>
</dbReference>
<dbReference type="PROSITE" id="PS51722">
    <property type="entry name" value="G_TR_2"/>
    <property type="match status" value="1"/>
</dbReference>
<evidence type="ECO:0000255" key="1">
    <source>
        <dbReference type="HAMAP-Rule" id="MF_00072"/>
    </source>
</evidence>
<gene>
    <name evidence="1" type="primary">prfC</name>
    <name type="ordered locus">APL_0030</name>
</gene>
<accession>A3MYA2</accession>
<reference key="1">
    <citation type="journal article" date="2008" name="J. Bacteriol.">
        <title>The complete genome sequence of Actinobacillus pleuropneumoniae L20 (serotype 5b).</title>
        <authorList>
            <person name="Foote S.J."/>
            <person name="Bosse J.T."/>
            <person name="Bouevitch A.B."/>
            <person name="Langford P.R."/>
            <person name="Young N.M."/>
            <person name="Nash J.H.E."/>
        </authorList>
    </citation>
    <scope>NUCLEOTIDE SEQUENCE [LARGE SCALE GENOMIC DNA]</scope>
    <source>
        <strain>L20</strain>
    </source>
</reference>
<keyword id="KW-0963">Cytoplasm</keyword>
<keyword id="KW-0342">GTP-binding</keyword>
<keyword id="KW-0547">Nucleotide-binding</keyword>
<keyword id="KW-0648">Protein biosynthesis</keyword>
<keyword id="KW-1185">Reference proteome</keyword>
<proteinExistence type="inferred from homology"/>
<protein>
    <recommendedName>
        <fullName evidence="1">Peptide chain release factor 3</fullName>
        <shortName evidence="1">RF-3</shortName>
    </recommendedName>
</protein>
<feature type="chain" id="PRO_1000023639" description="Peptide chain release factor 3">
    <location>
        <begin position="1"/>
        <end position="526"/>
    </location>
</feature>
<feature type="domain" description="tr-type G">
    <location>
        <begin position="8"/>
        <end position="277"/>
    </location>
</feature>
<feature type="binding site" evidence="1">
    <location>
        <begin position="17"/>
        <end position="24"/>
    </location>
    <ligand>
        <name>GTP</name>
        <dbReference type="ChEBI" id="CHEBI:37565"/>
    </ligand>
</feature>
<feature type="binding site" evidence="1">
    <location>
        <begin position="85"/>
        <end position="89"/>
    </location>
    <ligand>
        <name>GTP</name>
        <dbReference type="ChEBI" id="CHEBI:37565"/>
    </ligand>
</feature>
<feature type="binding site" evidence="1">
    <location>
        <begin position="139"/>
        <end position="142"/>
    </location>
    <ligand>
        <name>GTP</name>
        <dbReference type="ChEBI" id="CHEBI:37565"/>
    </ligand>
</feature>
<sequence length="526" mass="58980">MSYPQEVNKRRTFAIISHPDAGKTTITEKVLLYGNAIQTAGSVKGKGSSAHAKSDWMEMEKQRGISITTSVMQFPYNNCLVNLLDTPGHEDFSEDTYRTLTAVDSCLMVIDSAKGVEERTIKLIEVTRLRDTPILTFMNKLDRDIRDPMELLDEVESVLKIRCAPITWPIGCGKLFKGVYHIAKDETYLYQSGQGSTIQEVRIVKGLSSPELDAAVGDDLANQLREELELVQGASNEFDHEAFINGELTPVFFGTALGNFGVDHFLDGLTEWAPKPQARQTDVRTVESSEEKFSGFVFKIQANMDPKHRDRVAFMRVVSGKYEKGMKLKHVRIGKDVVISDALTFMAGDRAHAEEAYAGDIIGLHNHGTIQIGDTFTQGEVMKFTGIPNFAPELFRRIRLKDPLKQKQLLKGLVQLSEEGAVQVFRPLMNNDLIVGAVGVLQFDVVVSRLKTEYNVEAIYEAVNVATARWVECGDAKKFEEFKRKNEQNLALDGGDNLTYIAPTMVNLNLAQERYPDINFFKTREH</sequence>